<name>ARGB_MARN8</name>
<accession>A1U6L0</accession>
<protein>
    <recommendedName>
        <fullName evidence="1">Acetylglutamate kinase</fullName>
        <ecNumber evidence="1">2.7.2.8</ecNumber>
    </recommendedName>
    <alternativeName>
        <fullName evidence="1">N-acetyl-L-glutamate 5-phosphotransferase</fullName>
    </alternativeName>
    <alternativeName>
        <fullName evidence="1">NAG kinase</fullName>
        <shortName evidence="1">NAGK</shortName>
    </alternativeName>
</protein>
<reference key="1">
    <citation type="journal article" date="2011" name="Appl. Environ. Microbiol.">
        <title>Genomic potential of Marinobacter aquaeolei, a biogeochemical 'opportunitroph'.</title>
        <authorList>
            <person name="Singer E."/>
            <person name="Webb E.A."/>
            <person name="Nelson W.C."/>
            <person name="Heidelberg J.F."/>
            <person name="Ivanova N."/>
            <person name="Pati A."/>
            <person name="Edwards K.J."/>
        </authorList>
    </citation>
    <scope>NUCLEOTIDE SEQUENCE [LARGE SCALE GENOMIC DNA]</scope>
    <source>
        <strain>ATCC 700491 / DSM 11845 / VT8</strain>
    </source>
</reference>
<proteinExistence type="inferred from homology"/>
<keyword id="KW-0028">Amino-acid biosynthesis</keyword>
<keyword id="KW-0055">Arginine biosynthesis</keyword>
<keyword id="KW-0067">ATP-binding</keyword>
<keyword id="KW-0963">Cytoplasm</keyword>
<keyword id="KW-0418">Kinase</keyword>
<keyword id="KW-0547">Nucleotide-binding</keyword>
<keyword id="KW-0808">Transferase</keyword>
<sequence length="290" mass="30883">MQVASVLSRGLPYIQRFTGKTVVIKYGGNAMENEDLKSSFARDVVLMKLVGINPIVVHGGGPQIGELLERLNIQSRFVNGMRVTDAETMDVVEMVLGGQVNKEIVSLINAHGGTAVGLTGKDANLIRARKLEVVNRSPELERPEIIDIGHVGEVASVNVDVIDMLTRSNVIPVIAPIGVGPDGASYNINADLVAGKVAEAMKAEKLILLTNVSGLKSKEDKVLTGLTAQQVNDLIEDGTIHGGMLPKIRCALSAVENGVRTSHIIDGRVAHACLLEIFTDEGVGTLISRN</sequence>
<organism>
    <name type="scientific">Marinobacter nauticus (strain ATCC 700491 / DSM 11845 / VT8)</name>
    <name type="common">Marinobacter aquaeolei</name>
    <dbReference type="NCBI Taxonomy" id="351348"/>
    <lineage>
        <taxon>Bacteria</taxon>
        <taxon>Pseudomonadati</taxon>
        <taxon>Pseudomonadota</taxon>
        <taxon>Gammaproteobacteria</taxon>
        <taxon>Pseudomonadales</taxon>
        <taxon>Marinobacteraceae</taxon>
        <taxon>Marinobacter</taxon>
    </lineage>
</organism>
<dbReference type="EC" id="2.7.2.8" evidence="1"/>
<dbReference type="EMBL" id="CP000514">
    <property type="protein sequence ID" value="ABM20629.1"/>
    <property type="molecule type" value="Genomic_DNA"/>
</dbReference>
<dbReference type="SMR" id="A1U6L0"/>
<dbReference type="STRING" id="351348.Maqu_3560"/>
<dbReference type="KEGG" id="maq:Maqu_3560"/>
<dbReference type="eggNOG" id="COG0548">
    <property type="taxonomic scope" value="Bacteria"/>
</dbReference>
<dbReference type="HOGENOM" id="CLU_053680_0_0_6"/>
<dbReference type="UniPathway" id="UPA00068">
    <property type="reaction ID" value="UER00107"/>
</dbReference>
<dbReference type="Proteomes" id="UP000000998">
    <property type="component" value="Chromosome"/>
</dbReference>
<dbReference type="GO" id="GO:0005737">
    <property type="term" value="C:cytoplasm"/>
    <property type="evidence" value="ECO:0007669"/>
    <property type="project" value="UniProtKB-SubCell"/>
</dbReference>
<dbReference type="GO" id="GO:0003991">
    <property type="term" value="F:acetylglutamate kinase activity"/>
    <property type="evidence" value="ECO:0007669"/>
    <property type="project" value="UniProtKB-UniRule"/>
</dbReference>
<dbReference type="GO" id="GO:0005524">
    <property type="term" value="F:ATP binding"/>
    <property type="evidence" value="ECO:0007669"/>
    <property type="project" value="UniProtKB-UniRule"/>
</dbReference>
<dbReference type="GO" id="GO:0042450">
    <property type="term" value="P:arginine biosynthetic process via ornithine"/>
    <property type="evidence" value="ECO:0007669"/>
    <property type="project" value="UniProtKB-UniRule"/>
</dbReference>
<dbReference type="GO" id="GO:0006526">
    <property type="term" value="P:L-arginine biosynthetic process"/>
    <property type="evidence" value="ECO:0007669"/>
    <property type="project" value="UniProtKB-UniPathway"/>
</dbReference>
<dbReference type="CDD" id="cd04250">
    <property type="entry name" value="AAK_NAGK-C"/>
    <property type="match status" value="1"/>
</dbReference>
<dbReference type="FunFam" id="3.40.1160.10:FF:000004">
    <property type="entry name" value="Acetylglutamate kinase"/>
    <property type="match status" value="1"/>
</dbReference>
<dbReference type="Gene3D" id="3.40.1160.10">
    <property type="entry name" value="Acetylglutamate kinase-like"/>
    <property type="match status" value="1"/>
</dbReference>
<dbReference type="HAMAP" id="MF_00082">
    <property type="entry name" value="ArgB"/>
    <property type="match status" value="1"/>
</dbReference>
<dbReference type="InterPro" id="IPR036393">
    <property type="entry name" value="AceGlu_kinase-like_sf"/>
</dbReference>
<dbReference type="InterPro" id="IPR004662">
    <property type="entry name" value="AcgluKinase_fam"/>
</dbReference>
<dbReference type="InterPro" id="IPR037528">
    <property type="entry name" value="ArgB"/>
</dbReference>
<dbReference type="InterPro" id="IPR001048">
    <property type="entry name" value="Asp/Glu/Uridylate_kinase"/>
</dbReference>
<dbReference type="InterPro" id="IPR001057">
    <property type="entry name" value="Glu/AcGlu_kinase"/>
</dbReference>
<dbReference type="InterPro" id="IPR041727">
    <property type="entry name" value="NAGK-C"/>
</dbReference>
<dbReference type="NCBIfam" id="TIGR00761">
    <property type="entry name" value="argB"/>
    <property type="match status" value="1"/>
</dbReference>
<dbReference type="PANTHER" id="PTHR23342">
    <property type="entry name" value="N-ACETYLGLUTAMATE SYNTHASE"/>
    <property type="match status" value="1"/>
</dbReference>
<dbReference type="PANTHER" id="PTHR23342:SF0">
    <property type="entry name" value="N-ACETYLGLUTAMATE SYNTHASE, MITOCHONDRIAL"/>
    <property type="match status" value="1"/>
</dbReference>
<dbReference type="Pfam" id="PF00696">
    <property type="entry name" value="AA_kinase"/>
    <property type="match status" value="1"/>
</dbReference>
<dbReference type="PIRSF" id="PIRSF000728">
    <property type="entry name" value="NAGK"/>
    <property type="match status" value="1"/>
</dbReference>
<dbReference type="PRINTS" id="PR00474">
    <property type="entry name" value="GLU5KINASE"/>
</dbReference>
<dbReference type="SUPFAM" id="SSF53633">
    <property type="entry name" value="Carbamate kinase-like"/>
    <property type="match status" value="1"/>
</dbReference>
<feature type="chain" id="PRO_0000335644" description="Acetylglutamate kinase">
    <location>
        <begin position="1"/>
        <end position="290"/>
    </location>
</feature>
<feature type="binding site" evidence="1">
    <location>
        <begin position="60"/>
        <end position="61"/>
    </location>
    <ligand>
        <name>substrate</name>
    </ligand>
</feature>
<feature type="binding site" evidence="1">
    <location>
        <position position="82"/>
    </location>
    <ligand>
        <name>substrate</name>
    </ligand>
</feature>
<feature type="binding site" evidence="1">
    <location>
        <position position="187"/>
    </location>
    <ligand>
        <name>substrate</name>
    </ligand>
</feature>
<feature type="site" description="Transition state stabilizer" evidence="1">
    <location>
        <position position="25"/>
    </location>
</feature>
<feature type="site" description="Transition state stabilizer" evidence="1">
    <location>
        <position position="247"/>
    </location>
</feature>
<evidence type="ECO:0000255" key="1">
    <source>
        <dbReference type="HAMAP-Rule" id="MF_00082"/>
    </source>
</evidence>
<comment type="function">
    <text evidence="1">Catalyzes the ATP-dependent phosphorylation of N-acetyl-L-glutamate.</text>
</comment>
<comment type="catalytic activity">
    <reaction evidence="1">
        <text>N-acetyl-L-glutamate + ATP = N-acetyl-L-glutamyl 5-phosphate + ADP</text>
        <dbReference type="Rhea" id="RHEA:14629"/>
        <dbReference type="ChEBI" id="CHEBI:30616"/>
        <dbReference type="ChEBI" id="CHEBI:44337"/>
        <dbReference type="ChEBI" id="CHEBI:57936"/>
        <dbReference type="ChEBI" id="CHEBI:456216"/>
        <dbReference type="EC" id="2.7.2.8"/>
    </reaction>
</comment>
<comment type="pathway">
    <text evidence="1">Amino-acid biosynthesis; L-arginine biosynthesis; N(2)-acetyl-L-ornithine from L-glutamate: step 2/4.</text>
</comment>
<comment type="subcellular location">
    <subcellularLocation>
        <location evidence="1">Cytoplasm</location>
    </subcellularLocation>
</comment>
<comment type="similarity">
    <text evidence="1">Belongs to the acetylglutamate kinase family. ArgB subfamily.</text>
</comment>
<gene>
    <name evidence="1" type="primary">argB</name>
    <name type="ordered locus">Maqu_3560</name>
</gene>